<keyword id="KW-1185">Reference proteome</keyword>
<feature type="chain" id="PRO_0000193511" description="Uncharacterized protein CC285.14">
    <location>
        <begin position="1"/>
        <end position="1150"/>
    </location>
</feature>
<protein>
    <recommendedName>
        <fullName>Uncharacterized protein CC285.14</fullName>
    </recommendedName>
</protein>
<sequence>MSKKKPIVQYYDPFDLWPSIATDIESKIPLRNLQWVESYQYKKHTITSLDLEFLPWLEEFSSQDTSKDPTLLNIPLVNMLFLPEQDGEIYKTQHKPLATKWFQKVSKNENQSWMIVLVAEAQQAKRSNSLRRTHSRSSSYFAVKSTIDRVRGDFNTGNINHCVRLDYVRFGTPDAEGWNEFLKCLEWAVLSSLDSRFLQLSEQIRSIKLFDSSIFSDYLLFFLQKERLAASFFDLVLYRESLEQCEDMFSTLSKIISAIDGKKENISKYLGEGSDAQPDLKDFNSSFLILGSRYNTLHNLLADGDFTLFHFTLFLLSKIILLNLKISDYEKAFSTLQQALLFLTSSFFNEFVQNNLEIIAAFNYDCYTLLFKKITEAIHNNDTPIPLCCAKILLYARRQLTRMARWNNLIDDSSPLLWREPSFPLIEHHDNSLLDNRFQKLSETISSTSSFLSEYYRLSSEALSIFKAYKNRYSFVNTACDTGLAQYLLEDYENAYASLKNVDVQTAWSNDPLEEKWSKFYVDLLEKLEKFDEALEFASAISKGKVSIYNKNKILELSKKTAKSKVWNLDDFFTIEIPHMMAVVPHDDGINLSFMCESKVFDLESVDSVTCNYVLSSSKNPMNLLFTLHNSITDGKLNVHCNDIIPGRYHLKTIVFKLKDSVLSFQKDCLHSNKQIEVLNPTKHSNHLYILQSKISQQFQNDGIFACIPIMFGERFYKASCSEIKLSYIENSGFTNLEKSFLSEESHCGLESKTDSLVIKNIQKVPGVAKLYIPLTNTPVEGNEFLINLSYILESGQTVRFGKVLHIENAGIVEANCEKTNNMRDPLTSTIFLHIQPKEPIIFCSWNCMRKTKQGTYDNVFDIPYNIPVLSPMDCFTSCHFDSDMSIDLKFSMNCLRLADVVFMKLCVNIWERFDFIDIEHIMPLLDHACQQISLSNITQGTVVLPEEIRKLNGKKILNSFFDNEELRNEFSEFIQHLESEVSFNSLRSFVQEFEKKERLKNLPFYFSLHQTIGPLPFKDEMQSTTIEYIWKIPQKVLLNKPTEITLTFLRSLTHSKKEKQGQSFEIFYNFPAYTTTILFAGPTQRKIVWEKNQTTAQEQVTAVFLTAGRVMLPEVVVHSKDDDISILKNTKYTLVGRPLNDQPDLDYAP</sequence>
<accession>O74501</accession>
<dbReference type="EMBL" id="CU329672">
    <property type="protein sequence ID" value="CAA20853.1"/>
    <property type="molecule type" value="Genomic_DNA"/>
</dbReference>
<dbReference type="PIR" id="T41260">
    <property type="entry name" value="T41260"/>
</dbReference>
<dbReference type="BioGRID" id="275535">
    <property type="interactions" value="58"/>
</dbReference>
<dbReference type="FunCoup" id="O74501">
    <property type="interactions" value="17"/>
</dbReference>
<dbReference type="STRING" id="284812.O74501"/>
<dbReference type="iPTMnet" id="O74501"/>
<dbReference type="PaxDb" id="4896-SPCC285.14.1"/>
<dbReference type="EnsemblFungi" id="SPCC285.14.1">
    <property type="protein sequence ID" value="SPCC285.14.1:pep"/>
    <property type="gene ID" value="SPCC285.14"/>
</dbReference>
<dbReference type="KEGG" id="spo:2538961"/>
<dbReference type="PomBase" id="SPCC285.14"/>
<dbReference type="VEuPathDB" id="FungiDB:SPCC285.14"/>
<dbReference type="eggNOG" id="KOG1931">
    <property type="taxonomic scope" value="Eukaryota"/>
</dbReference>
<dbReference type="HOGENOM" id="CLU_275725_0_0_1"/>
<dbReference type="InParanoid" id="O74501"/>
<dbReference type="OMA" id="NLQWVES"/>
<dbReference type="Reactome" id="R-SPO-204005">
    <property type="pathway name" value="COPII-mediated vesicle transport"/>
</dbReference>
<dbReference type="Reactome" id="R-SPO-8876198">
    <property type="pathway name" value="RAB GEFs exchange GTP for GDP on RABs"/>
</dbReference>
<dbReference type="PRO" id="PR:O74501"/>
<dbReference type="Proteomes" id="UP000002485">
    <property type="component" value="Chromosome III"/>
</dbReference>
<dbReference type="GO" id="GO:0005801">
    <property type="term" value="C:cis-Golgi network"/>
    <property type="evidence" value="ECO:0000303"/>
    <property type="project" value="PomBase"/>
</dbReference>
<dbReference type="GO" id="GO:0005829">
    <property type="term" value="C:cytosol"/>
    <property type="evidence" value="ECO:0007005"/>
    <property type="project" value="PomBase"/>
</dbReference>
<dbReference type="GO" id="GO:1990071">
    <property type="term" value="C:TRAPPII protein complex"/>
    <property type="evidence" value="ECO:0000318"/>
    <property type="project" value="GO_Central"/>
</dbReference>
<dbReference type="GO" id="GO:0034498">
    <property type="term" value="P:early endosome to Golgi transport"/>
    <property type="evidence" value="ECO:0000318"/>
    <property type="project" value="GO_Central"/>
</dbReference>
<dbReference type="GO" id="GO:0006891">
    <property type="term" value="P:intra-Golgi vesicle-mediated transport"/>
    <property type="evidence" value="ECO:0000318"/>
    <property type="project" value="GO_Central"/>
</dbReference>
<dbReference type="GO" id="GO:0006886">
    <property type="term" value="P:intracellular protein transport"/>
    <property type="evidence" value="ECO:0000305"/>
    <property type="project" value="PomBase"/>
</dbReference>
<dbReference type="InterPro" id="IPR045126">
    <property type="entry name" value="TRAPPC10/Trs130"/>
</dbReference>
<dbReference type="InterPro" id="IPR056913">
    <property type="entry name" value="TRAPPC10/Trs130_N"/>
</dbReference>
<dbReference type="PANTHER" id="PTHR13251">
    <property type="entry name" value="EPILEPSY HOLOPROSENCEPHALY CANDIDATE 1/TMEM1"/>
    <property type="match status" value="1"/>
</dbReference>
<dbReference type="PANTHER" id="PTHR13251:SF3">
    <property type="entry name" value="TRAFFICKING PROTEIN PARTICLE COMPLEX SUBUNIT 10"/>
    <property type="match status" value="1"/>
</dbReference>
<dbReference type="Pfam" id="PF23036">
    <property type="entry name" value="TRAPPC10_1st"/>
    <property type="match status" value="1"/>
</dbReference>
<organism>
    <name type="scientific">Schizosaccharomyces pombe (strain 972 / ATCC 24843)</name>
    <name type="common">Fission yeast</name>
    <dbReference type="NCBI Taxonomy" id="284812"/>
    <lineage>
        <taxon>Eukaryota</taxon>
        <taxon>Fungi</taxon>
        <taxon>Dikarya</taxon>
        <taxon>Ascomycota</taxon>
        <taxon>Taphrinomycotina</taxon>
        <taxon>Schizosaccharomycetes</taxon>
        <taxon>Schizosaccharomycetales</taxon>
        <taxon>Schizosaccharomycetaceae</taxon>
        <taxon>Schizosaccharomyces</taxon>
    </lineage>
</organism>
<comment type="similarity">
    <text evidence="1">Belongs to the TMEM1 family.</text>
</comment>
<proteinExistence type="inferred from homology"/>
<name>YCRE_SCHPO</name>
<evidence type="ECO:0000305" key="1"/>
<gene>
    <name type="ORF">SPCC285.14</name>
</gene>
<reference key="1">
    <citation type="journal article" date="2002" name="Nature">
        <title>The genome sequence of Schizosaccharomyces pombe.</title>
        <authorList>
            <person name="Wood V."/>
            <person name="Gwilliam R."/>
            <person name="Rajandream M.A."/>
            <person name="Lyne M.H."/>
            <person name="Lyne R."/>
            <person name="Stewart A."/>
            <person name="Sgouros J.G."/>
            <person name="Peat N."/>
            <person name="Hayles J."/>
            <person name="Baker S.G."/>
            <person name="Basham D."/>
            <person name="Bowman S."/>
            <person name="Brooks K."/>
            <person name="Brown D."/>
            <person name="Brown S."/>
            <person name="Chillingworth T."/>
            <person name="Churcher C.M."/>
            <person name="Collins M."/>
            <person name="Connor R."/>
            <person name="Cronin A."/>
            <person name="Davis P."/>
            <person name="Feltwell T."/>
            <person name="Fraser A."/>
            <person name="Gentles S."/>
            <person name="Goble A."/>
            <person name="Hamlin N."/>
            <person name="Harris D.E."/>
            <person name="Hidalgo J."/>
            <person name="Hodgson G."/>
            <person name="Holroyd S."/>
            <person name="Hornsby T."/>
            <person name="Howarth S."/>
            <person name="Huckle E.J."/>
            <person name="Hunt S."/>
            <person name="Jagels K."/>
            <person name="James K.D."/>
            <person name="Jones L."/>
            <person name="Jones M."/>
            <person name="Leather S."/>
            <person name="McDonald S."/>
            <person name="McLean J."/>
            <person name="Mooney P."/>
            <person name="Moule S."/>
            <person name="Mungall K.L."/>
            <person name="Murphy L.D."/>
            <person name="Niblett D."/>
            <person name="Odell C."/>
            <person name="Oliver K."/>
            <person name="O'Neil S."/>
            <person name="Pearson D."/>
            <person name="Quail M.A."/>
            <person name="Rabbinowitsch E."/>
            <person name="Rutherford K.M."/>
            <person name="Rutter S."/>
            <person name="Saunders D."/>
            <person name="Seeger K."/>
            <person name="Sharp S."/>
            <person name="Skelton J."/>
            <person name="Simmonds M.N."/>
            <person name="Squares R."/>
            <person name="Squares S."/>
            <person name="Stevens K."/>
            <person name="Taylor K."/>
            <person name="Taylor R.G."/>
            <person name="Tivey A."/>
            <person name="Walsh S.V."/>
            <person name="Warren T."/>
            <person name="Whitehead S."/>
            <person name="Woodward J.R."/>
            <person name="Volckaert G."/>
            <person name="Aert R."/>
            <person name="Robben J."/>
            <person name="Grymonprez B."/>
            <person name="Weltjens I."/>
            <person name="Vanstreels E."/>
            <person name="Rieger M."/>
            <person name="Schaefer M."/>
            <person name="Mueller-Auer S."/>
            <person name="Gabel C."/>
            <person name="Fuchs M."/>
            <person name="Duesterhoeft A."/>
            <person name="Fritzc C."/>
            <person name="Holzer E."/>
            <person name="Moestl D."/>
            <person name="Hilbert H."/>
            <person name="Borzym K."/>
            <person name="Langer I."/>
            <person name="Beck A."/>
            <person name="Lehrach H."/>
            <person name="Reinhardt R."/>
            <person name="Pohl T.M."/>
            <person name="Eger P."/>
            <person name="Zimmermann W."/>
            <person name="Wedler H."/>
            <person name="Wambutt R."/>
            <person name="Purnelle B."/>
            <person name="Goffeau A."/>
            <person name="Cadieu E."/>
            <person name="Dreano S."/>
            <person name="Gloux S."/>
            <person name="Lelaure V."/>
            <person name="Mottier S."/>
            <person name="Galibert F."/>
            <person name="Aves S.J."/>
            <person name="Xiang Z."/>
            <person name="Hunt C."/>
            <person name="Moore K."/>
            <person name="Hurst S.M."/>
            <person name="Lucas M."/>
            <person name="Rochet M."/>
            <person name="Gaillardin C."/>
            <person name="Tallada V.A."/>
            <person name="Garzon A."/>
            <person name="Thode G."/>
            <person name="Daga R.R."/>
            <person name="Cruzado L."/>
            <person name="Jimenez J."/>
            <person name="Sanchez M."/>
            <person name="del Rey F."/>
            <person name="Benito J."/>
            <person name="Dominguez A."/>
            <person name="Revuelta J.L."/>
            <person name="Moreno S."/>
            <person name="Armstrong J."/>
            <person name="Forsburg S.L."/>
            <person name="Cerutti L."/>
            <person name="Lowe T."/>
            <person name="McCombie W.R."/>
            <person name="Paulsen I."/>
            <person name="Potashkin J."/>
            <person name="Shpakovski G.V."/>
            <person name="Ussery D."/>
            <person name="Barrell B.G."/>
            <person name="Nurse P."/>
        </authorList>
    </citation>
    <scope>NUCLEOTIDE SEQUENCE [LARGE SCALE GENOMIC DNA]</scope>
    <source>
        <strain>972 / ATCC 24843</strain>
    </source>
</reference>